<reference key="1">
    <citation type="submission" date="2007-03" db="EMBL/GenBank/DDBJ databases">
        <title>Complete sequence of chromosome of Methanococcus maripaludis C5.</title>
        <authorList>
            <consortium name="US DOE Joint Genome Institute"/>
            <person name="Copeland A."/>
            <person name="Lucas S."/>
            <person name="Lapidus A."/>
            <person name="Barry K."/>
            <person name="Glavina del Rio T."/>
            <person name="Dalin E."/>
            <person name="Tice H."/>
            <person name="Pitluck S."/>
            <person name="Chertkov O."/>
            <person name="Brettin T."/>
            <person name="Bruce D."/>
            <person name="Han C."/>
            <person name="Detter J.C."/>
            <person name="Schmutz J."/>
            <person name="Larimer F."/>
            <person name="Land M."/>
            <person name="Hauser L."/>
            <person name="Kyrpides N."/>
            <person name="Mikhailova N."/>
            <person name="Sieprawska-Lupa M."/>
            <person name="Whitman W.B."/>
            <person name="Richardson P."/>
        </authorList>
    </citation>
    <scope>NUCLEOTIDE SEQUENCE [LARGE SCALE GENOMIC DNA]</scope>
    <source>
        <strain>C5 / ATCC BAA-1333</strain>
    </source>
</reference>
<gene>
    <name evidence="1" type="primary">nac</name>
    <name type="ordered locus">MmarC5_1383</name>
</gene>
<organism>
    <name type="scientific">Methanococcus maripaludis (strain C5 / ATCC BAA-1333)</name>
    <dbReference type="NCBI Taxonomy" id="402880"/>
    <lineage>
        <taxon>Archaea</taxon>
        <taxon>Methanobacteriati</taxon>
        <taxon>Methanobacteriota</taxon>
        <taxon>Methanomada group</taxon>
        <taxon>Methanococci</taxon>
        <taxon>Methanococcales</taxon>
        <taxon>Methanococcaceae</taxon>
        <taxon>Methanococcus</taxon>
    </lineage>
</organism>
<keyword id="KW-0653">Protein transport</keyword>
<keyword id="KW-0694">RNA-binding</keyword>
<keyword id="KW-0813">Transport</keyword>
<proteinExistence type="inferred from homology"/>
<feature type="chain" id="PRO_1000083767" description="Nascent polypeptide-associated complex protein">
    <location>
        <begin position="1"/>
        <end position="126"/>
    </location>
</feature>
<feature type="domain" description="NAC-A/B" evidence="1">
    <location>
        <begin position="10"/>
        <end position="77"/>
    </location>
</feature>
<dbReference type="EMBL" id="CP000609">
    <property type="protein sequence ID" value="ABO35681.1"/>
    <property type="molecule type" value="Genomic_DNA"/>
</dbReference>
<dbReference type="RefSeq" id="WP_011869132.1">
    <property type="nucleotide sequence ID" value="NC_009135.1"/>
</dbReference>
<dbReference type="SMR" id="A4FZP7"/>
<dbReference type="STRING" id="402880.MmarC5_1383"/>
<dbReference type="GeneID" id="4928770"/>
<dbReference type="KEGG" id="mmq:MmarC5_1383"/>
<dbReference type="eggNOG" id="arCOG04061">
    <property type="taxonomic scope" value="Archaea"/>
</dbReference>
<dbReference type="HOGENOM" id="CLU_146475_1_0_2"/>
<dbReference type="OrthoDB" id="53273at2157"/>
<dbReference type="Proteomes" id="UP000000253">
    <property type="component" value="Chromosome"/>
</dbReference>
<dbReference type="GO" id="GO:0003723">
    <property type="term" value="F:RNA binding"/>
    <property type="evidence" value="ECO:0007669"/>
    <property type="project" value="UniProtKB-UniRule"/>
</dbReference>
<dbReference type="GO" id="GO:0015031">
    <property type="term" value="P:protein transport"/>
    <property type="evidence" value="ECO:0007669"/>
    <property type="project" value="UniProtKB-UniRule"/>
</dbReference>
<dbReference type="CDD" id="cd14359">
    <property type="entry name" value="UBA_AeNAC"/>
    <property type="match status" value="1"/>
</dbReference>
<dbReference type="Gene3D" id="1.10.8.10">
    <property type="entry name" value="DNA helicase RuvA subunit, C-terminal domain"/>
    <property type="match status" value="1"/>
</dbReference>
<dbReference type="Gene3D" id="2.20.70.30">
    <property type="entry name" value="Nascent polypeptide-associated complex domain"/>
    <property type="match status" value="1"/>
</dbReference>
<dbReference type="HAMAP" id="MF_00814">
    <property type="entry name" value="NAC_arch"/>
    <property type="match status" value="1"/>
</dbReference>
<dbReference type="InterPro" id="IPR044034">
    <property type="entry name" value="NAC-like_UBA"/>
</dbReference>
<dbReference type="InterPro" id="IPR038187">
    <property type="entry name" value="NAC_A/B_dom_sf"/>
</dbReference>
<dbReference type="InterPro" id="IPR005231">
    <property type="entry name" value="NAC_arc"/>
</dbReference>
<dbReference type="InterPro" id="IPR002715">
    <property type="entry name" value="Nas_poly-pep-assoc_cplx_dom"/>
</dbReference>
<dbReference type="InterPro" id="IPR009060">
    <property type="entry name" value="UBA-like_sf"/>
</dbReference>
<dbReference type="NCBIfam" id="TIGR00264">
    <property type="entry name" value="archaeal-type nascent polypeptide-associated complex protein"/>
    <property type="match status" value="1"/>
</dbReference>
<dbReference type="Pfam" id="PF01849">
    <property type="entry name" value="NAC"/>
    <property type="match status" value="1"/>
</dbReference>
<dbReference type="Pfam" id="PF19026">
    <property type="entry name" value="UBA_HYPK"/>
    <property type="match status" value="1"/>
</dbReference>
<dbReference type="SMART" id="SM01407">
    <property type="entry name" value="NAC"/>
    <property type="match status" value="1"/>
</dbReference>
<dbReference type="SUPFAM" id="SSF46934">
    <property type="entry name" value="UBA-like"/>
    <property type="match status" value="1"/>
</dbReference>
<dbReference type="PROSITE" id="PS51151">
    <property type="entry name" value="NAC_AB"/>
    <property type="match status" value="1"/>
</dbReference>
<sequence length="126" mass="14004">MFPGGGKFNPRMMKQMQKMMKDFGMDAEDLKAVKVTIELEDTILVFEKPKVQVMDMLGNKTYSITGKAKKVAKAEEKIEDVEVKVEVTEEDIEMVSSQCGVSKEEAKKALEEANGDLAEAILKLGN</sequence>
<accession>A4FZP7</accession>
<name>NAC_METM5</name>
<comment type="function">
    <text evidence="1">Contacts the emerging nascent chain on the ribosome.</text>
</comment>
<comment type="subunit">
    <text evidence="1">Homodimer. Interacts with the ribosome. Binds ribosomal RNA.</text>
</comment>
<comment type="similarity">
    <text evidence="1">Belongs to the NAC-alpha family.</text>
</comment>
<evidence type="ECO:0000255" key="1">
    <source>
        <dbReference type="HAMAP-Rule" id="MF_00814"/>
    </source>
</evidence>
<protein>
    <recommendedName>
        <fullName evidence="1">Nascent polypeptide-associated complex protein</fullName>
    </recommendedName>
</protein>